<accession>B1LJN2</accession>
<gene>
    <name evidence="2" type="primary">adk</name>
    <name type="ordered locus">EcSMS35_0518</name>
</gene>
<sequence>MRIILLGAPGAGKGTQAQFIMEKYGIPQISTGDMLRAAVKSGSELGKQAKDIMDAGKLVTDELVIALVKERIAQEDCRNGFLLDGFPRTIPQADAMKEAGINVDYVLEFDVPDELIVDRIVGRRVHAPSGRVYHVKFNPPKVEGKDDVTGEELTTRKDDQEETVRKRLVEYHQMTAPLIGYYSKEAEAGNTKYAKVDGTKPVAEVRADLEKILG</sequence>
<proteinExistence type="inferred from homology"/>
<dbReference type="EC" id="2.7.4.3" evidence="2"/>
<dbReference type="EMBL" id="CP000970">
    <property type="protein sequence ID" value="ACB15578.1"/>
    <property type="molecule type" value="Genomic_DNA"/>
</dbReference>
<dbReference type="RefSeq" id="WP_001220233.1">
    <property type="nucleotide sequence ID" value="NC_010498.1"/>
</dbReference>
<dbReference type="BMRB" id="B1LJN2"/>
<dbReference type="SMR" id="B1LJN2"/>
<dbReference type="GeneID" id="75170492"/>
<dbReference type="KEGG" id="ecm:EcSMS35_0518"/>
<dbReference type="HOGENOM" id="CLU_032354_1_2_6"/>
<dbReference type="UniPathway" id="UPA00588">
    <property type="reaction ID" value="UER00649"/>
</dbReference>
<dbReference type="Proteomes" id="UP000007011">
    <property type="component" value="Chromosome"/>
</dbReference>
<dbReference type="GO" id="GO:0005737">
    <property type="term" value="C:cytoplasm"/>
    <property type="evidence" value="ECO:0007669"/>
    <property type="project" value="UniProtKB-SubCell"/>
</dbReference>
<dbReference type="GO" id="GO:0004017">
    <property type="term" value="F:adenylate kinase activity"/>
    <property type="evidence" value="ECO:0007669"/>
    <property type="project" value="UniProtKB-UniRule"/>
</dbReference>
<dbReference type="GO" id="GO:0005524">
    <property type="term" value="F:ATP binding"/>
    <property type="evidence" value="ECO:0007669"/>
    <property type="project" value="UniProtKB-UniRule"/>
</dbReference>
<dbReference type="GO" id="GO:0044209">
    <property type="term" value="P:AMP salvage"/>
    <property type="evidence" value="ECO:0007669"/>
    <property type="project" value="UniProtKB-UniRule"/>
</dbReference>
<dbReference type="CDD" id="cd01428">
    <property type="entry name" value="ADK"/>
    <property type="match status" value="1"/>
</dbReference>
<dbReference type="FunFam" id="3.40.50.300:FF:000106">
    <property type="entry name" value="Adenylate kinase mitochondrial"/>
    <property type="match status" value="1"/>
</dbReference>
<dbReference type="Gene3D" id="3.40.50.300">
    <property type="entry name" value="P-loop containing nucleotide triphosphate hydrolases"/>
    <property type="match status" value="1"/>
</dbReference>
<dbReference type="HAMAP" id="MF_00235">
    <property type="entry name" value="Adenylate_kinase_Adk"/>
    <property type="match status" value="1"/>
</dbReference>
<dbReference type="InterPro" id="IPR006259">
    <property type="entry name" value="Adenyl_kin_sub"/>
</dbReference>
<dbReference type="InterPro" id="IPR000850">
    <property type="entry name" value="Adenylat/UMP-CMP_kin"/>
</dbReference>
<dbReference type="InterPro" id="IPR033690">
    <property type="entry name" value="Adenylat_kinase_CS"/>
</dbReference>
<dbReference type="InterPro" id="IPR007862">
    <property type="entry name" value="Adenylate_kinase_lid-dom"/>
</dbReference>
<dbReference type="InterPro" id="IPR027417">
    <property type="entry name" value="P-loop_NTPase"/>
</dbReference>
<dbReference type="NCBIfam" id="TIGR01351">
    <property type="entry name" value="adk"/>
    <property type="match status" value="1"/>
</dbReference>
<dbReference type="NCBIfam" id="NF001379">
    <property type="entry name" value="PRK00279.1-1"/>
    <property type="match status" value="1"/>
</dbReference>
<dbReference type="NCBIfam" id="NF001380">
    <property type="entry name" value="PRK00279.1-2"/>
    <property type="match status" value="1"/>
</dbReference>
<dbReference type="NCBIfam" id="NF001381">
    <property type="entry name" value="PRK00279.1-3"/>
    <property type="match status" value="1"/>
</dbReference>
<dbReference type="NCBIfam" id="NF011100">
    <property type="entry name" value="PRK14527.1"/>
    <property type="match status" value="1"/>
</dbReference>
<dbReference type="PANTHER" id="PTHR23359">
    <property type="entry name" value="NUCLEOTIDE KINASE"/>
    <property type="match status" value="1"/>
</dbReference>
<dbReference type="Pfam" id="PF00406">
    <property type="entry name" value="ADK"/>
    <property type="match status" value="1"/>
</dbReference>
<dbReference type="Pfam" id="PF05191">
    <property type="entry name" value="ADK_lid"/>
    <property type="match status" value="1"/>
</dbReference>
<dbReference type="PRINTS" id="PR00094">
    <property type="entry name" value="ADENYLTKNASE"/>
</dbReference>
<dbReference type="SUPFAM" id="SSF52540">
    <property type="entry name" value="P-loop containing nucleoside triphosphate hydrolases"/>
    <property type="match status" value="1"/>
</dbReference>
<dbReference type="PROSITE" id="PS00113">
    <property type="entry name" value="ADENYLATE_KINASE"/>
    <property type="match status" value="1"/>
</dbReference>
<organism>
    <name type="scientific">Escherichia coli (strain SMS-3-5 / SECEC)</name>
    <dbReference type="NCBI Taxonomy" id="439855"/>
    <lineage>
        <taxon>Bacteria</taxon>
        <taxon>Pseudomonadati</taxon>
        <taxon>Pseudomonadota</taxon>
        <taxon>Gammaproteobacteria</taxon>
        <taxon>Enterobacterales</taxon>
        <taxon>Enterobacteriaceae</taxon>
        <taxon>Escherichia</taxon>
    </lineage>
</organism>
<reference key="1">
    <citation type="journal article" date="2008" name="J. Bacteriol.">
        <title>Insights into the environmental resistance gene pool from the genome sequence of the multidrug-resistant environmental isolate Escherichia coli SMS-3-5.</title>
        <authorList>
            <person name="Fricke W.F."/>
            <person name="Wright M.S."/>
            <person name="Lindell A.H."/>
            <person name="Harkins D.M."/>
            <person name="Baker-Austin C."/>
            <person name="Ravel J."/>
            <person name="Stepanauskas R."/>
        </authorList>
    </citation>
    <scope>NUCLEOTIDE SEQUENCE [LARGE SCALE GENOMIC DNA]</scope>
    <source>
        <strain>SMS-3-5 / SECEC</strain>
    </source>
</reference>
<evidence type="ECO:0000250" key="1"/>
<evidence type="ECO:0000255" key="2">
    <source>
        <dbReference type="HAMAP-Rule" id="MF_00235"/>
    </source>
</evidence>
<protein>
    <recommendedName>
        <fullName evidence="2">Adenylate kinase</fullName>
        <shortName evidence="2">AK</shortName>
        <ecNumber evidence="2">2.7.4.3</ecNumber>
    </recommendedName>
    <alternativeName>
        <fullName evidence="2">ATP-AMP transphosphorylase</fullName>
    </alternativeName>
    <alternativeName>
        <fullName evidence="2">ATP:AMP phosphotransferase</fullName>
    </alternativeName>
    <alternativeName>
        <fullName evidence="2">Adenylate monophosphate kinase</fullName>
    </alternativeName>
</protein>
<name>KAD_ECOSM</name>
<comment type="function">
    <text evidence="2">Catalyzes the reversible transfer of the terminal phosphate group between ATP and AMP. Plays an important role in cellular energy homeostasis and in adenine nucleotide metabolism.</text>
</comment>
<comment type="catalytic activity">
    <reaction evidence="2">
        <text>AMP + ATP = 2 ADP</text>
        <dbReference type="Rhea" id="RHEA:12973"/>
        <dbReference type="ChEBI" id="CHEBI:30616"/>
        <dbReference type="ChEBI" id="CHEBI:456215"/>
        <dbReference type="ChEBI" id="CHEBI:456216"/>
        <dbReference type="EC" id="2.7.4.3"/>
    </reaction>
</comment>
<comment type="pathway">
    <text evidence="2">Purine metabolism; AMP biosynthesis via salvage pathway; AMP from ADP: step 1/1.</text>
</comment>
<comment type="subunit">
    <text evidence="2">Monomer.</text>
</comment>
<comment type="subcellular location">
    <subcellularLocation>
        <location evidence="2">Cytoplasm</location>
    </subcellularLocation>
</comment>
<comment type="domain">
    <text evidence="2">Consists of three domains, a large central CORE domain and two small peripheral domains, NMPbind and LID, which undergo movements during catalysis. The LID domain closes over the site of phosphoryl transfer upon ATP binding. Assembling and dissambling the active center during each catalytic cycle provides an effective means to prevent ATP hydrolysis.</text>
</comment>
<comment type="similarity">
    <text evidence="2">Belongs to the adenylate kinase family.</text>
</comment>
<feature type="chain" id="PRO_1000191142" description="Adenylate kinase">
    <location>
        <begin position="1"/>
        <end position="214"/>
    </location>
</feature>
<feature type="region of interest" description="NMP" evidence="2">
    <location>
        <begin position="30"/>
        <end position="59"/>
    </location>
</feature>
<feature type="region of interest" description="LID">
    <location>
        <begin position="122"/>
        <end position="159"/>
    </location>
</feature>
<feature type="binding site" evidence="2">
    <location>
        <begin position="10"/>
        <end position="15"/>
    </location>
    <ligand>
        <name>ATP</name>
        <dbReference type="ChEBI" id="CHEBI:30616"/>
    </ligand>
</feature>
<feature type="binding site" evidence="2">
    <location>
        <position position="31"/>
    </location>
    <ligand>
        <name>AMP</name>
        <dbReference type="ChEBI" id="CHEBI:456215"/>
    </ligand>
</feature>
<feature type="binding site" evidence="2">
    <location>
        <position position="36"/>
    </location>
    <ligand>
        <name>AMP</name>
        <dbReference type="ChEBI" id="CHEBI:456215"/>
    </ligand>
</feature>
<feature type="binding site" evidence="2">
    <location>
        <begin position="57"/>
        <end position="59"/>
    </location>
    <ligand>
        <name>AMP</name>
        <dbReference type="ChEBI" id="CHEBI:456215"/>
    </ligand>
</feature>
<feature type="binding site" evidence="2">
    <location>
        <begin position="85"/>
        <end position="88"/>
    </location>
    <ligand>
        <name>AMP</name>
        <dbReference type="ChEBI" id="CHEBI:456215"/>
    </ligand>
</feature>
<feature type="binding site" evidence="2">
    <location>
        <position position="92"/>
    </location>
    <ligand>
        <name>AMP</name>
        <dbReference type="ChEBI" id="CHEBI:456215"/>
    </ligand>
</feature>
<feature type="binding site" evidence="2">
    <location>
        <position position="123"/>
    </location>
    <ligand>
        <name>ATP</name>
        <dbReference type="ChEBI" id="CHEBI:30616"/>
    </ligand>
</feature>
<feature type="binding site" evidence="2">
    <location>
        <begin position="132"/>
        <end position="133"/>
    </location>
    <ligand>
        <name>ATP</name>
        <dbReference type="ChEBI" id="CHEBI:30616"/>
    </ligand>
</feature>
<feature type="binding site" evidence="2">
    <location>
        <position position="156"/>
    </location>
    <ligand>
        <name>AMP</name>
        <dbReference type="ChEBI" id="CHEBI:456215"/>
    </ligand>
</feature>
<feature type="binding site" evidence="2">
    <location>
        <position position="167"/>
    </location>
    <ligand>
        <name>AMP</name>
        <dbReference type="ChEBI" id="CHEBI:456215"/>
    </ligand>
</feature>
<feature type="binding site" evidence="2">
    <location>
        <position position="200"/>
    </location>
    <ligand>
        <name>ATP</name>
        <dbReference type="ChEBI" id="CHEBI:30616"/>
    </ligand>
</feature>
<feature type="modified residue" description="N6-acetyllysine" evidence="1">
    <location>
        <position position="192"/>
    </location>
</feature>
<keyword id="KW-0007">Acetylation</keyword>
<keyword id="KW-0067">ATP-binding</keyword>
<keyword id="KW-0963">Cytoplasm</keyword>
<keyword id="KW-0418">Kinase</keyword>
<keyword id="KW-0545">Nucleotide biosynthesis</keyword>
<keyword id="KW-0547">Nucleotide-binding</keyword>
<keyword id="KW-0808">Transferase</keyword>